<evidence type="ECO:0000250" key="1">
    <source>
        <dbReference type="UniProtKB" id="P27409"/>
    </source>
</evidence>
<evidence type="ECO:0000250" key="2">
    <source>
        <dbReference type="UniProtKB" id="P54634"/>
    </source>
</evidence>
<evidence type="ECO:0000250" key="3">
    <source>
        <dbReference type="UniProtKB" id="Q04544"/>
    </source>
</evidence>
<evidence type="ECO:0000250" key="4">
    <source>
        <dbReference type="UniProtKB" id="Q66914"/>
    </source>
</evidence>
<evidence type="ECO:0000250" key="5">
    <source>
        <dbReference type="UniProtKB" id="Q69014"/>
    </source>
</evidence>
<evidence type="ECO:0000250" key="6">
    <source>
        <dbReference type="UniProtKB" id="Q6XDK8"/>
    </source>
</evidence>
<evidence type="ECO:0000255" key="7">
    <source>
        <dbReference type="PROSITE-ProRule" id="PRU00539"/>
    </source>
</evidence>
<evidence type="ECO:0000255" key="8">
    <source>
        <dbReference type="PROSITE-ProRule" id="PRU00551"/>
    </source>
</evidence>
<evidence type="ECO:0000255" key="9">
    <source>
        <dbReference type="PROSITE-ProRule" id="PRU01242"/>
    </source>
</evidence>
<evidence type="ECO:0000269" key="10">
    <source>
    </source>
</evidence>
<evidence type="ECO:0000305" key="11"/>
<dbReference type="EC" id="3.6.1.15" evidence="3"/>
<dbReference type="EC" id="2.7.7.48" evidence="5"/>
<dbReference type="EC" id="3.4.22.66" evidence="6"/>
<dbReference type="EMBL" id="D31836">
    <property type="protein sequence ID" value="BAA06622.2"/>
    <property type="molecule type" value="Genomic_RNA"/>
</dbReference>
<dbReference type="EMBL" id="D90357">
    <property type="protein sequence ID" value="BAA14370.1"/>
    <property type="molecule type" value="Genomic_RNA"/>
</dbReference>
<dbReference type="SMR" id="P27408"/>
<dbReference type="MEROPS" id="C24.002"/>
<dbReference type="Proteomes" id="UP000008668">
    <property type="component" value="Genome"/>
</dbReference>
<dbReference type="Proteomes" id="UP000173772">
    <property type="component" value="Genome"/>
</dbReference>
<dbReference type="GO" id="GO:0044167">
    <property type="term" value="C:host cell endoplasmic reticulum membrane"/>
    <property type="evidence" value="ECO:0007669"/>
    <property type="project" value="UniProtKB-SubCell"/>
</dbReference>
<dbReference type="GO" id="GO:0016020">
    <property type="term" value="C:membrane"/>
    <property type="evidence" value="ECO:0007669"/>
    <property type="project" value="UniProtKB-KW"/>
</dbReference>
<dbReference type="GO" id="GO:0005524">
    <property type="term" value="F:ATP binding"/>
    <property type="evidence" value="ECO:0007669"/>
    <property type="project" value="UniProtKB-KW"/>
</dbReference>
<dbReference type="GO" id="GO:0016887">
    <property type="term" value="F:ATP hydrolysis activity"/>
    <property type="evidence" value="ECO:0007669"/>
    <property type="project" value="InterPro"/>
</dbReference>
<dbReference type="GO" id="GO:0004197">
    <property type="term" value="F:cysteine-type endopeptidase activity"/>
    <property type="evidence" value="ECO:0007669"/>
    <property type="project" value="InterPro"/>
</dbReference>
<dbReference type="GO" id="GO:0003723">
    <property type="term" value="F:RNA binding"/>
    <property type="evidence" value="ECO:0007669"/>
    <property type="project" value="InterPro"/>
</dbReference>
<dbReference type="GO" id="GO:0003724">
    <property type="term" value="F:RNA helicase activity"/>
    <property type="evidence" value="ECO:0007669"/>
    <property type="project" value="InterPro"/>
</dbReference>
<dbReference type="GO" id="GO:0003968">
    <property type="term" value="F:RNA-directed RNA polymerase activity"/>
    <property type="evidence" value="ECO:0007669"/>
    <property type="project" value="UniProtKB-KW"/>
</dbReference>
<dbReference type="GO" id="GO:0006351">
    <property type="term" value="P:DNA-templated transcription"/>
    <property type="evidence" value="ECO:0007669"/>
    <property type="project" value="InterPro"/>
</dbReference>
<dbReference type="GO" id="GO:0006508">
    <property type="term" value="P:proteolysis"/>
    <property type="evidence" value="ECO:0007669"/>
    <property type="project" value="UniProtKB-KW"/>
</dbReference>
<dbReference type="GO" id="GO:0039657">
    <property type="term" value="P:symbiont-mediated suppression of host gene expression"/>
    <property type="evidence" value="ECO:0007669"/>
    <property type="project" value="UniProtKB-KW"/>
</dbReference>
<dbReference type="GO" id="GO:0039694">
    <property type="term" value="P:viral RNA genome replication"/>
    <property type="evidence" value="ECO:0007669"/>
    <property type="project" value="InterPro"/>
</dbReference>
<dbReference type="CDD" id="cd00009">
    <property type="entry name" value="AAA"/>
    <property type="match status" value="1"/>
</dbReference>
<dbReference type="CDD" id="cd23192">
    <property type="entry name" value="Caliciviridae_RdRp"/>
    <property type="match status" value="1"/>
</dbReference>
<dbReference type="Gene3D" id="1.10.260.110">
    <property type="match status" value="1"/>
</dbReference>
<dbReference type="Gene3D" id="1.20.960.20">
    <property type="match status" value="1"/>
</dbReference>
<dbReference type="Gene3D" id="3.30.70.270">
    <property type="match status" value="1"/>
</dbReference>
<dbReference type="Gene3D" id="6.10.140.320">
    <property type="match status" value="1"/>
</dbReference>
<dbReference type="Gene3D" id="6.10.250.3230">
    <property type="match status" value="1"/>
</dbReference>
<dbReference type="Gene3D" id="3.40.50.300">
    <property type="entry name" value="P-loop containing nucleotide triphosphate hydrolases"/>
    <property type="match status" value="1"/>
</dbReference>
<dbReference type="InterPro" id="IPR003593">
    <property type="entry name" value="AAA+_ATPase"/>
</dbReference>
<dbReference type="InterPro" id="IPR043502">
    <property type="entry name" value="DNA/RNA_pol_sf"/>
</dbReference>
<dbReference type="InterPro" id="IPR004004">
    <property type="entry name" value="Helic/Pol/Pept_Calicivir-typ"/>
</dbReference>
<dbReference type="InterPro" id="IPR000605">
    <property type="entry name" value="Helicase_SF3_ssDNA/RNA_vir"/>
</dbReference>
<dbReference type="InterPro" id="IPR014759">
    <property type="entry name" value="Helicase_SF3_ssRNA_vir"/>
</dbReference>
<dbReference type="InterPro" id="IPR027417">
    <property type="entry name" value="P-loop_NTPase"/>
</dbReference>
<dbReference type="InterPro" id="IPR000317">
    <property type="entry name" value="Peptidase_C24"/>
</dbReference>
<dbReference type="InterPro" id="IPR009003">
    <property type="entry name" value="Peptidase_S1_PA"/>
</dbReference>
<dbReference type="InterPro" id="IPR043128">
    <property type="entry name" value="Rev_trsase/Diguanyl_cyclase"/>
</dbReference>
<dbReference type="InterPro" id="IPR001205">
    <property type="entry name" value="RNA-dir_pol_C"/>
</dbReference>
<dbReference type="InterPro" id="IPR007094">
    <property type="entry name" value="RNA-dir_pol_PSvirus"/>
</dbReference>
<dbReference type="InterPro" id="IPR049434">
    <property type="entry name" value="VPg"/>
</dbReference>
<dbReference type="Pfam" id="PF03510">
    <property type="entry name" value="Peptidase_C24"/>
    <property type="match status" value="1"/>
</dbReference>
<dbReference type="Pfam" id="PF00680">
    <property type="entry name" value="RdRP_1"/>
    <property type="match status" value="1"/>
</dbReference>
<dbReference type="Pfam" id="PF00910">
    <property type="entry name" value="RNA_helicase"/>
    <property type="match status" value="1"/>
</dbReference>
<dbReference type="Pfam" id="PF20915">
    <property type="entry name" value="VPg"/>
    <property type="match status" value="1"/>
</dbReference>
<dbReference type="PRINTS" id="PR00916">
    <property type="entry name" value="2CENDOPTASE"/>
</dbReference>
<dbReference type="PRINTS" id="PR00918">
    <property type="entry name" value="CALICVIRUSNS"/>
</dbReference>
<dbReference type="SMART" id="SM00382">
    <property type="entry name" value="AAA"/>
    <property type="match status" value="1"/>
</dbReference>
<dbReference type="SUPFAM" id="SSF56672">
    <property type="entry name" value="DNA/RNA polymerases"/>
    <property type="match status" value="1"/>
</dbReference>
<dbReference type="SUPFAM" id="SSF52540">
    <property type="entry name" value="P-loop containing nucleoside triphosphate hydrolases"/>
    <property type="match status" value="2"/>
</dbReference>
<dbReference type="SUPFAM" id="SSF50494">
    <property type="entry name" value="Trypsin-like serine proteases"/>
    <property type="match status" value="1"/>
</dbReference>
<dbReference type="PROSITE" id="PS51894">
    <property type="entry name" value="CV_3CL_PRO"/>
    <property type="match status" value="1"/>
</dbReference>
<dbReference type="PROSITE" id="PS50507">
    <property type="entry name" value="RDRP_SSRNA_POS"/>
    <property type="match status" value="1"/>
</dbReference>
<dbReference type="PROSITE" id="PS51218">
    <property type="entry name" value="SF3_HELICASE_2"/>
    <property type="match status" value="1"/>
</dbReference>
<organism>
    <name type="scientific">Feline calicivirus (strain Japanese F4)</name>
    <name type="common">FCV</name>
    <dbReference type="NCBI Taxonomy" id="11980"/>
    <lineage>
        <taxon>Viruses</taxon>
        <taxon>Riboviria</taxon>
        <taxon>Orthornavirae</taxon>
        <taxon>Pisuviricota</taxon>
        <taxon>Pisoniviricetes</taxon>
        <taxon>Picornavirales</taxon>
        <taxon>Caliciviridae</taxon>
        <taxon>Vesivirus</taxon>
        <taxon>Feline calicivirus</taxon>
    </lineage>
</organism>
<comment type="function">
    <molecule>NS2</molecule>
    <text evidence="2 4">Together with NTPase and NS4, initiates the formation of the replication complex (By similarity). Induces the proliferation of the host smooth ER membranes forming long tubular structures (By similarity). These remodeled membranes probably form the viral factories that contain the replication complex (By similarity).</text>
</comment>
<comment type="function">
    <molecule>NTPase</molecule>
    <text evidence="2 3 4">Displays NTPase activity, but no helicase activity (By similarity). Induces the formation of convoluted membranes derived from the host ER (By similarity). These remodeled membranes probably form the viral factories that contain the replication complex (By similarity). Together with NS2 and NS4, initiates the formation of the replication complex (By similarity).</text>
</comment>
<comment type="function">
    <molecule>NS4</molecule>
    <text evidence="2 4">Probable key protein responsible for the formation of membrane alterations by the virus (By similarity). Induces the formation of convoluted membranes derived from the host ER (By similarity). These remodeled membranes probably form the viral factories that contain the replication complex (By similarity). Together with NS2 and NTPase, initiates the formation of the replication complex (By similarity).</text>
</comment>
<comment type="function">
    <molecule>Viral genome-linked protein</molecule>
    <text evidence="1">Viral genome-linked protein is covalently linked to the 5'-end of the positive-strand, negative-strand genomic RNAs and subgenomic RNA. Acts as a genome-linked replication primer. May recruit ribosome to viral RNA thereby promoting viral proteins translation. Interacts with host translation initiation complex to allow the translation of viral proteins.</text>
</comment>
<comment type="function">
    <molecule>Protease-polymerase p76</molecule>
    <text evidence="4 11">Protease-polymerase p76 processes the polyprotein: Pro-Pol is first released by autocleavage, then all other proteins are cleaved (By similarity). Cleaves host translation initiation factor eIF4G1, eIF4G2 and PABP1 thereby inducing a shutdown of host protein synthesis (By similarity). This shutdown may not prevent viral mRNA from being translated since viral Vpg replaces the cap (By similarity). Also functions as an RNA-directed RNA polymerase, which replicates genomic and antigenomic viral RNA by recognizing specific signals (Probable). Also transcribes a subgenomic mRNA by initiating RNA synthesis internally on antigenomic RNA (Probable). This sgRNA codes for structural proteins (Probable). Catalyzes the covalent attachment VPg with viral RNAs (By similarity). Cleaves host G3BP1 thereby preventing the assembly of host stress granules (By similarity).</text>
</comment>
<comment type="catalytic activity">
    <molecule>NTPase</molecule>
    <reaction evidence="3">
        <text>a ribonucleoside 5'-triphosphate + H2O = a ribonucleoside 5'-diphosphate + phosphate + H(+)</text>
        <dbReference type="Rhea" id="RHEA:23680"/>
        <dbReference type="ChEBI" id="CHEBI:15377"/>
        <dbReference type="ChEBI" id="CHEBI:15378"/>
        <dbReference type="ChEBI" id="CHEBI:43474"/>
        <dbReference type="ChEBI" id="CHEBI:57930"/>
        <dbReference type="ChEBI" id="CHEBI:61557"/>
        <dbReference type="EC" id="3.6.1.15"/>
    </reaction>
</comment>
<comment type="catalytic activity">
    <molecule>Protease-polymerase p76</molecule>
    <reaction evidence="7">
        <text>RNA(n) + a ribonucleoside 5'-triphosphate = RNA(n+1) + diphosphate</text>
        <dbReference type="Rhea" id="RHEA:21248"/>
        <dbReference type="Rhea" id="RHEA-COMP:14527"/>
        <dbReference type="Rhea" id="RHEA-COMP:17342"/>
        <dbReference type="ChEBI" id="CHEBI:33019"/>
        <dbReference type="ChEBI" id="CHEBI:61557"/>
        <dbReference type="ChEBI" id="CHEBI:140395"/>
        <dbReference type="EC" id="2.7.7.48"/>
    </reaction>
</comment>
<comment type="catalytic activity">
    <molecule>Protease-polymerase p76</molecule>
    <reaction evidence="9">
        <text>Endopeptidase with a preference for cleavage when the P1 position is occupied by Glu-|-Xaa and the P1' position is occupied by Gly-|-Yaa.</text>
        <dbReference type="EC" id="3.4.22.66"/>
    </reaction>
</comment>
<comment type="subunit">
    <molecule>NS2</molecule>
    <text evidence="4">Homodimer (By similarity). Interacts with NTPase, protein p30 and protease-polymerase p76 (By similarity).</text>
</comment>
<comment type="subunit">
    <molecule>Viral genome-linked protein</molecule>
    <text evidence="1 4">Interacts with capsid protein VP1 and protease-polymerase p76 (By similarity). Interacts with host IEF4e; this interaction plays a role in translation of viral proteins (By similarity).</text>
</comment>
<comment type="subunit">
    <molecule>Protease-polymerase p76</molecule>
    <text evidence="4">Homooligomer (By similarity). Interacts with Vpg, protein p32 and may interact with capsid protein VP1 (By similarity).</text>
</comment>
<comment type="subcellular location">
    <molecule>NS2</molecule>
    <subcellularLocation>
        <location evidence="4">Host endoplasmic reticulum membrane</location>
    </subcellularLocation>
</comment>
<comment type="subcellular location">
    <molecule>NS4</molecule>
    <subcellularLocation>
        <location evidence="4">Host endoplasmic reticulum membrane</location>
    </subcellularLocation>
</comment>
<comment type="subcellular location">
    <molecule>NTPase</molecule>
    <subcellularLocation>
        <location evidence="4">Host endoplasmic reticulum membrane</location>
    </subcellularLocation>
</comment>
<comment type="domain">
    <molecule>Viral genome-linked protein</molecule>
    <text evidence="1">Contains a compact core domain in the N-terminus half that is composed of a three-helix bundle.</text>
</comment>
<comment type="domain">
    <molecule>Protease-polymerase p76</molecule>
    <text evidence="11">Protease-polymerase is composed of two domains displaying two different catalytic activity. These activities may act independently.</text>
</comment>
<comment type="PTM">
    <molecule>Genome polyprotein</molecule>
    <text evidence="4">Specific enzymatic cleavages in vivo yield mature proteins (By similarity). Pro-Pol is first autocatalytically cleaved, then processes the whole polyprotein (By similarity).</text>
</comment>
<comment type="PTM">
    <molecule>Viral genome-linked protein</molecule>
    <text evidence="4">VPg is uridylylated by the polymerase and is covalently attached to the 5'-end of the polyadenylated genomic and subgenomic RNAs. This uridylylated form acts as a nucleotide-peptide primer for the polymerase.</text>
</comment>
<gene>
    <name type="ORF">ORF1</name>
</gene>
<organismHost>
    <name type="scientific">Felidae</name>
    <name type="common">cat family</name>
    <dbReference type="NCBI Taxonomy" id="9681"/>
</organismHost>
<reference key="1">
    <citation type="journal article" date="1994" name="J. Vet. Med. Sci.">
        <title>The molecular cloning and sequence of an open reading frame encoding for non-structural proteins of feline calicivirus F4 strain isolated in Japan.</title>
        <authorList>
            <person name="Oshikamo R."/>
            <person name="Tohya Y."/>
            <person name="Kawaguchi Y."/>
            <person name="Tomonaga K."/>
            <person name="Maeda K."/>
            <person name="Takeda N."/>
            <person name="Utagawa E."/>
            <person name="Kai C."/>
            <person name="Mikami T."/>
        </authorList>
    </citation>
    <scope>NUCLEOTIDE SEQUENCE [GENOMIC RNA]</scope>
</reference>
<reference key="2">
    <citation type="journal article" date="1991" name="Virology">
        <title>Sequence analysis of the 3'-end of feline calicivirus genome.</title>
        <authorList>
            <person name="Tohya Y."/>
            <person name="Taniguchi Y."/>
            <person name="Takahashi E."/>
            <person name="Utagawa E."/>
            <person name="Takeda N."/>
            <person name="Miyamura K."/>
            <person name="Yamazaki S."/>
            <person name="Mikami T."/>
        </authorList>
    </citation>
    <scope>NUCLEOTIDE SEQUENCE [GENOMIC RNA] OF 1383-1763</scope>
</reference>
<reference key="3">
    <citation type="journal article" date="2007" name="J. Virol.">
        <title>Highly conserved configuration of catalytic amino acid residues among calicivirus-encoded proteases.</title>
        <authorList>
            <person name="Oka T."/>
            <person name="Yamamoto M."/>
            <person name="Yokoyama M."/>
            <person name="Ogawa S."/>
            <person name="Hansman G.S."/>
            <person name="Katayama K."/>
            <person name="Miyashita K."/>
            <person name="Takagi H."/>
            <person name="Tohya Y."/>
            <person name="Sato H."/>
            <person name="Takeda N."/>
        </authorList>
    </citation>
    <scope>ACTIVE SITES</scope>
    <scope>MUTAGENESIS OF HIS-1079; HIS-1093; HIS-1099; HIS-1102; HIS-1110; GLU-1121; ASP-1125; GLU-1131; ASP-1155; GLU-1164; CYS-1193 AND HIS-1208</scope>
</reference>
<name>POLG_FCVF4</name>
<accession>P27408</accession>
<accession>Q66913</accession>
<protein>
    <recommendedName>
        <fullName>Genome polyprotein</fullName>
    </recommendedName>
    <component>
        <recommendedName>
            <fullName>NS1</fullName>
        </recommendedName>
        <alternativeName>
            <fullName>Protein p5.6</fullName>
        </alternativeName>
    </component>
    <component>
        <recommendedName>
            <fullName>NS2</fullName>
        </recommendedName>
        <alternativeName>
            <fullName>Protein p32</fullName>
        </alternativeName>
    </component>
    <component>
        <recommendedName>
            <fullName>NTPase</fullName>
            <ecNumber evidence="3">3.6.1.15</ecNumber>
        </recommendedName>
        <alternativeName>
            <fullName evidence="11">NS3</fullName>
        </alternativeName>
        <alternativeName>
            <fullName>p39</fullName>
        </alternativeName>
    </component>
    <component>
        <recommendedName>
            <fullName evidence="11">NS4</fullName>
        </recommendedName>
        <alternativeName>
            <fullName evidence="11">3A-like protein p30</fullName>
        </alternativeName>
        <alternativeName>
            <fullName>Protein p30</fullName>
        </alternativeName>
    </component>
    <component>
        <recommendedName>
            <fullName>Viral genome-linked protein</fullName>
            <shortName>VPg</shortName>
        </recommendedName>
        <alternativeName>
            <fullName evidence="11">NS5</fullName>
        </alternativeName>
        <alternativeName>
            <fullName>p13</fullName>
        </alternativeName>
    </component>
    <component>
        <recommendedName>
            <fullName>Protease-polymerase p76</fullName>
            <shortName>Pro-Pol</shortName>
            <ecNumber evidence="5">2.7.7.48</ecNumber>
            <ecNumber evidence="6">3.4.22.66</ecNumber>
        </recommendedName>
        <alternativeName>
            <fullName evidence="11">NS6-7</fullName>
        </alternativeName>
    </component>
</protein>
<keyword id="KW-0067">ATP-binding</keyword>
<keyword id="KW-0191">Covalent protein-RNA linkage</keyword>
<keyword id="KW-1262">Eukaryotic host gene expression shutoff by virus</keyword>
<keyword id="KW-1193">Eukaryotic host translation shutoff by virus</keyword>
<keyword id="KW-1038">Host endoplasmic reticulum</keyword>
<keyword id="KW-1190">Host gene expression shutoff by virus</keyword>
<keyword id="KW-1043">Host membrane</keyword>
<keyword id="KW-0945">Host-virus interaction</keyword>
<keyword id="KW-0378">Hydrolase</keyword>
<keyword id="KW-0472">Membrane</keyword>
<keyword id="KW-0547">Nucleotide-binding</keyword>
<keyword id="KW-0548">Nucleotidyltransferase</keyword>
<keyword id="KW-0597">Phosphoprotein</keyword>
<keyword id="KW-0645">Protease</keyword>
<keyword id="KW-0696">RNA-directed RNA polymerase</keyword>
<keyword id="KW-0788">Thiol protease</keyword>
<keyword id="KW-0808">Transferase</keyword>
<keyword id="KW-0693">Viral RNA replication</keyword>
<proteinExistence type="evidence at protein level"/>
<feature type="chain" id="PRO_0000341991" description="Genome polyprotein">
    <location>
        <begin position="1"/>
        <end position="1763"/>
    </location>
</feature>
<feature type="chain" id="PRO_0000341992" description="NS1">
    <location>
        <begin position="1"/>
        <end position="46"/>
    </location>
</feature>
<feature type="chain" id="PRO_0000341993" description="NS2">
    <location>
        <begin position="47"/>
        <end position="331"/>
    </location>
</feature>
<feature type="chain" id="PRO_0000341994" description="NTPase">
    <location>
        <begin position="332"/>
        <end position="685"/>
    </location>
</feature>
<feature type="chain" id="PRO_0000341995" description="NS4">
    <location>
        <begin position="686"/>
        <end position="960"/>
    </location>
</feature>
<feature type="chain" id="PRO_0000341996" description="Viral genome-linked protein">
    <location>
        <begin position="961"/>
        <end position="1071"/>
    </location>
</feature>
<feature type="chain" id="PRO_0000036899" description="Protease-polymerase p76">
    <location>
        <begin position="1072"/>
        <end position="1763"/>
    </location>
</feature>
<feature type="domain" description="SF3 helicase" evidence="8">
    <location>
        <begin position="458"/>
        <end position="614"/>
    </location>
</feature>
<feature type="domain" description="Peptidase C24" evidence="9">
    <location>
        <begin position="1073"/>
        <end position="1229"/>
    </location>
</feature>
<feature type="domain" description="RdRp catalytic" evidence="7">
    <location>
        <begin position="1478"/>
        <end position="1603"/>
    </location>
</feature>
<feature type="active site" description="For 3CLpro activity" evidence="9 10">
    <location>
        <position position="1110"/>
    </location>
</feature>
<feature type="active site" description="For 3CLpro activity" evidence="9 10">
    <location>
        <position position="1131"/>
    </location>
</feature>
<feature type="active site" description="For 3CLpro activity" evidence="9 10">
    <location>
        <position position="1193"/>
    </location>
</feature>
<feature type="binding site" evidence="8">
    <location>
        <begin position="484"/>
        <end position="491"/>
    </location>
    <ligand>
        <name>ATP</name>
        <dbReference type="ChEBI" id="CHEBI:30616"/>
    </ligand>
</feature>
<feature type="site" description="Cleavage; by Pro-Pol" evidence="4">
    <location>
        <begin position="46"/>
        <end position="47"/>
    </location>
</feature>
<feature type="site" description="Cleavage; by Pro-Pol" evidence="4">
    <location>
        <begin position="331"/>
        <end position="332"/>
    </location>
</feature>
<feature type="site" description="Cleavage; by Pro-Pol" evidence="4">
    <location>
        <begin position="685"/>
        <end position="686"/>
    </location>
</feature>
<feature type="site" description="Cleavage; by Pro-Pol" evidence="4">
    <location>
        <begin position="960"/>
        <end position="961"/>
    </location>
</feature>
<feature type="site" description="Cleavage; by Pro-Pol" evidence="4">
    <location>
        <begin position="1071"/>
        <end position="1072"/>
    </location>
</feature>
<feature type="modified residue" description="O-(5'-phospho-RNA)-tyrosine" evidence="1">
    <location>
        <position position="984"/>
    </location>
</feature>
<feature type="modified residue" description="Phosphothreonine" evidence="1">
    <location>
        <position position="1040"/>
    </location>
</feature>
<feature type="modified residue" description="Phosphoserine" evidence="1">
    <location>
        <position position="1067"/>
    </location>
</feature>
<feature type="mutagenesis site" description="No effect on protease activity in vitro." evidence="10">
    <original>H</original>
    <variation>A</variation>
    <location>
        <position position="1079"/>
    </location>
</feature>
<feature type="mutagenesis site" description="No effect on protease activity in vitro." evidence="10">
    <original>H</original>
    <variation>A</variation>
    <location>
        <position position="1093"/>
    </location>
</feature>
<feature type="mutagenesis site" description="No effect on protease activity in vitro." evidence="10">
    <original>H</original>
    <variation>A</variation>
    <location>
        <position position="1099"/>
    </location>
</feature>
<feature type="mutagenesis site" description="No effect on protease activity in vitro." evidence="10">
    <original>H</original>
    <variation>A</variation>
    <location>
        <position position="1102"/>
    </location>
</feature>
<feature type="mutagenesis site" description="Complete loss of protease activity in vitro." evidence="10">
    <original>H</original>
    <variation>A</variation>
    <location>
        <position position="1110"/>
    </location>
</feature>
<feature type="mutagenesis site" description="No effect on protease activity in vitro." evidence="10">
    <original>E</original>
    <variation>A</variation>
    <location>
        <position position="1121"/>
    </location>
</feature>
<feature type="mutagenesis site" description="No effect on protease activity in vitro." evidence="10">
    <original>D</original>
    <variation>A</variation>
    <location>
        <position position="1125"/>
    </location>
</feature>
<feature type="mutagenesis site" description="Complete loss of protease activity in vitro." evidence="10">
    <original>E</original>
    <variation>A</variation>
    <location>
        <position position="1131"/>
    </location>
</feature>
<feature type="mutagenesis site" description="No effect on protease activity in vitro." evidence="10">
    <original>D</original>
    <variation>A</variation>
    <location>
        <position position="1155"/>
    </location>
</feature>
<feature type="mutagenesis site" description="No effect on protease activity in vitro." evidence="10">
    <original>E</original>
    <variation>A</variation>
    <location>
        <position position="1164"/>
    </location>
</feature>
<feature type="mutagenesis site" description="Complete loss of protease activity in vitro." evidence="10">
    <original>C</original>
    <variation>A</variation>
    <location>
        <position position="1193"/>
    </location>
</feature>
<feature type="mutagenesis site" description="Complete loss of protease activity in vitro." evidence="10">
    <original>H</original>
    <variation>A</variation>
    <location>
        <position position="1208"/>
    </location>
</feature>
<feature type="sequence conflict" description="In Ref. 2; BAA14370." evidence="11" ref="2">
    <original>V</original>
    <variation>M</variation>
    <location>
        <position position="1417"/>
    </location>
</feature>
<feature type="sequence conflict" description="In Ref. 2; BAA14370." evidence="11" ref="2">
    <original>YSK</original>
    <variation>FSN</variation>
    <location>
        <begin position="1485"/>
        <end position="1487"/>
    </location>
</feature>
<sequence>MSQTLSFVLKTHSVRKDFVHSVKVTLARRRDLQYLYNKLARTMRAEACPSCSSYDVCPNCTSSDIPDNGSSTTSIPSWEDVTKTSTYSLLLSEDTSDELCPDDLVNVAAHIRKALSTQAHPANTEMCKEQLTSLLVMAEAMLPQRSRASIPLHQQHQAARLEWREKFFSKPLDFLLERIGVSKDILQITAIWKIILEKACYCKSYGEQWFCAAKQKLREMRTFESDTLKPLVGAFIDGLRFMTVDNPNPMGFLPKLIGLVKPLNLAMIIDNHENTLSGWVVTLTAIMELYNITECTIDVITSLVTGFYDKISKATKFFSQVKALFTGFRSEDVANSFWYMAAAILCYLITGLIPNNGRFSKIKACLSGATTLVSGIIATQKLAAMFATWNSESIVNELSARTVAISELNNPTTTSDTDSVERLLELAKILHEEIKVHTLNPIMQSYNPILRNLMSTLDGVITSCNKRKAIARKRQVPVCYILTGPPGCGKTTAAQALAKKLSDQEPSVINLDVDHHDTYTGNEVCIIDEFDSSDKVDYANFVIGMVNSAPMVLNCDMLENKGKLFTSKYIIMTSNSETPVKPSSKRAGAFYRRVTIIDVTNPLVESHKRARPGTSVPRSCYKKNFSHLSLAKRGAECWCKEYVLDPKGLQHQTIKAPPPTFLNIDSLAQTMKQDFVLKNMAFEAEDGCSEHRYGFICQQSEVETVRRLLNAIRARLNATFTVCVGPEASHSIGCTAHVLTPDEPFNGRRFIVSRCNEASLAALEGNCVQSALGVCMSNKDLTHLCHFIRGKIVNDSVRLDELPANQHVVTVNSVFDLAWALRRHLTLTGQFQAIRAAYDVLTVPDKVPAMLRHWMDETSFSDEHVVTQFVTPGGVVILESCGGARIWALGHNVIRAGGVTATPTGGCVRLVGLSAQTLPWSEIFRELFTLLGRIWSSIKVSTLVLTALGMYASRFRPKSEAKGKTKSKIGPYRGRGVALTDDEYDEWREHNANRKLDLSVEDFLMLRHRAALGADDADAVKFRSWWNSRTRPGDGFEDVTVIGKGGVKHEKIRTSTLRAVDRGYDVSFAEESGPGTKFHKNAIGSVTDVCGEHKGYCVHMGHGVYASVAHVVKGDSYFLGERIFDVKTNGEFCCFRSTKILPSAAPFFSGKPTRDPWGSPVATEWKPKAYTTTSGKIVGCFATTSTETHPGDCGLPYIDDNGRVTGLHTGSGGPKTPSAKLVVPYIHIDMKNKSVTPQKYDETKPNISYKGLVCKQLDEIRIIPKGTRLHVSPAHVDDFEECSHQPASLGSGDPRCPKSLTAIVVDSLKPYCDRVEGPPHDVLHRVQKMLIDHLSGFVPMNISSETSMLSAFHKLNHDTSCGPYLGGRKKDHMVNGEPDKQLLDLLSSKWKLATQGIALPHEYTIGLKDELRPIEKVQEGKRRMIWGCDVGVATVCAAAFKGVSDAITANHQYGPIQVGINMDSPSVEVLYQRIKSAAKVFAVDYSKWDSTQSPRVSAASIDILRYFSDRSPIVDSAANTLKSPPIAIFNGVAVKVASGLPSGMPLTSVINSLNHCMYVGCAILQSLEARQIPVTWNLFSSFDMMTYGDDGVYMFPTMFASVSDQIFGNLSAYGLKPTRVDKSVGAIESIDPESVVFLKRTITRTPNGIRGLLDRSSIIRQFFYIKGENSDDWKTPPKTIDPTSRGQQLWNACLYASQHGVEFYNKVLKLAMRAVEYEGLHLKPPSYSSALEHYNSQFNGVEARSDQINMSDVTALHCDVFEV</sequence>